<dbReference type="EMBL" id="AF400663">
    <property type="protein sequence ID" value="AAM64044.1"/>
    <property type="molecule type" value="mRNA"/>
</dbReference>
<dbReference type="EMBL" id="AK096705">
    <property type="protein sequence ID" value="BAC04847.1"/>
    <property type="molecule type" value="mRNA"/>
</dbReference>
<dbReference type="EMBL" id="BC011897">
    <property type="protein sequence ID" value="AAH11897.1"/>
    <property type="molecule type" value="mRNA"/>
</dbReference>
<dbReference type="EMBL" id="BC017763">
    <property type="protein sequence ID" value="AAH17763.1"/>
    <property type="status" value="ALT_INIT"/>
    <property type="molecule type" value="mRNA"/>
</dbReference>
<dbReference type="EMBL" id="BC063629">
    <property type="protein sequence ID" value="AAH63629.1"/>
    <property type="molecule type" value="mRNA"/>
</dbReference>
<dbReference type="CCDS" id="CCDS3017.1">
    <molecule id="Q96EW2-1"/>
</dbReference>
<dbReference type="RefSeq" id="NP_001307657.1">
    <property type="nucleotide sequence ID" value="NM_001320728.1"/>
</dbReference>
<dbReference type="RefSeq" id="NP_078886.2">
    <molecule id="Q96EW2-1"/>
    <property type="nucleotide sequence ID" value="NM_024610.5"/>
</dbReference>
<dbReference type="RefSeq" id="XP_005247819.1">
    <molecule id="Q96EW2-3"/>
    <property type="nucleotide sequence ID" value="XM_005247762.3"/>
</dbReference>
<dbReference type="RefSeq" id="XP_047304876.1">
    <molecule id="Q96EW2-2"/>
    <property type="nucleotide sequence ID" value="XM_047448920.1"/>
</dbReference>
<dbReference type="RefSeq" id="XP_054203837.1">
    <molecule id="Q96EW2-3"/>
    <property type="nucleotide sequence ID" value="XM_054347862.1"/>
</dbReference>
<dbReference type="RefSeq" id="XP_054203838.1">
    <molecule id="Q96EW2-2"/>
    <property type="nucleotide sequence ID" value="XM_054347863.1"/>
</dbReference>
<dbReference type="SMR" id="Q96EW2"/>
<dbReference type="BioGRID" id="122788">
    <property type="interactions" value="20"/>
</dbReference>
<dbReference type="FunCoup" id="Q96EW2">
    <property type="interactions" value="1703"/>
</dbReference>
<dbReference type="IntAct" id="Q96EW2">
    <property type="interactions" value="26"/>
</dbReference>
<dbReference type="MINT" id="Q96EW2"/>
<dbReference type="STRING" id="9606.ENSP00000302562"/>
<dbReference type="iPTMnet" id="Q96EW2"/>
<dbReference type="PhosphoSitePlus" id="Q96EW2"/>
<dbReference type="BioMuta" id="HSPBAP1"/>
<dbReference type="DMDM" id="74731618"/>
<dbReference type="jPOST" id="Q96EW2"/>
<dbReference type="MassIVE" id="Q96EW2"/>
<dbReference type="PaxDb" id="9606-ENSP00000302562"/>
<dbReference type="PeptideAtlas" id="Q96EW2"/>
<dbReference type="ProteomicsDB" id="76457">
    <molecule id="Q96EW2-1"/>
</dbReference>
<dbReference type="ProteomicsDB" id="76458">
    <molecule id="Q96EW2-2"/>
</dbReference>
<dbReference type="ProteomicsDB" id="76459">
    <molecule id="Q96EW2-3"/>
</dbReference>
<dbReference type="Pumba" id="Q96EW2"/>
<dbReference type="Antibodypedia" id="16790">
    <property type="antibodies" value="230 antibodies from 31 providers"/>
</dbReference>
<dbReference type="DNASU" id="79663"/>
<dbReference type="Ensembl" id="ENST00000306103.3">
    <molecule id="Q96EW2-1"/>
    <property type="protein sequence ID" value="ENSP00000302562.2"/>
    <property type="gene ID" value="ENSG00000169087.11"/>
</dbReference>
<dbReference type="GeneID" id="79663"/>
<dbReference type="KEGG" id="hsa:79663"/>
<dbReference type="MANE-Select" id="ENST00000306103.3">
    <property type="protein sequence ID" value="ENSP00000302562.2"/>
    <property type="RefSeq nucleotide sequence ID" value="NM_024610.6"/>
    <property type="RefSeq protein sequence ID" value="NP_078886.2"/>
</dbReference>
<dbReference type="UCSC" id="uc003efu.3">
    <molecule id="Q96EW2-1"/>
    <property type="organism name" value="human"/>
</dbReference>
<dbReference type="AGR" id="HGNC:16389"/>
<dbReference type="CTD" id="79663"/>
<dbReference type="DisGeNET" id="79663"/>
<dbReference type="GeneCards" id="HSPBAP1"/>
<dbReference type="HGNC" id="HGNC:16389">
    <property type="gene designation" value="HSPBAP1"/>
</dbReference>
<dbReference type="HPA" id="ENSG00000169087">
    <property type="expression patterns" value="Low tissue specificity"/>
</dbReference>
<dbReference type="MalaCards" id="HSPBAP1"/>
<dbReference type="MIM" id="608263">
    <property type="type" value="gene"/>
</dbReference>
<dbReference type="neXtProt" id="NX_Q96EW2"/>
<dbReference type="OpenTargets" id="ENSG00000169087"/>
<dbReference type="Orphanet" id="422526">
    <property type="disease" value="Hereditary clear cell renal cell carcinoma"/>
</dbReference>
<dbReference type="PharmGKB" id="PA29515"/>
<dbReference type="VEuPathDB" id="HostDB:ENSG00000169087"/>
<dbReference type="eggNOG" id="KOG2132">
    <property type="taxonomic scope" value="Eukaryota"/>
</dbReference>
<dbReference type="GeneTree" id="ENSGT00940000159893"/>
<dbReference type="HOGENOM" id="CLU_016785_5_1_1"/>
<dbReference type="InParanoid" id="Q96EW2"/>
<dbReference type="OMA" id="QRMMSKS"/>
<dbReference type="OrthoDB" id="47172at2759"/>
<dbReference type="PAN-GO" id="Q96EW2">
    <property type="GO annotations" value="1 GO annotation based on evolutionary models"/>
</dbReference>
<dbReference type="PhylomeDB" id="Q96EW2"/>
<dbReference type="TreeFam" id="TF315056"/>
<dbReference type="PathwayCommons" id="Q96EW2"/>
<dbReference type="SignaLink" id="Q96EW2"/>
<dbReference type="BioGRID-ORCS" id="79663">
    <property type="hits" value="11 hits in 1159 CRISPR screens"/>
</dbReference>
<dbReference type="ChiTaRS" id="HSPBAP1">
    <property type="organism name" value="human"/>
</dbReference>
<dbReference type="GenomeRNAi" id="79663"/>
<dbReference type="Pharos" id="Q96EW2">
    <property type="development level" value="Tbio"/>
</dbReference>
<dbReference type="PRO" id="PR:Q96EW2"/>
<dbReference type="Proteomes" id="UP000005640">
    <property type="component" value="Chromosome 3"/>
</dbReference>
<dbReference type="RNAct" id="Q96EW2">
    <property type="molecule type" value="protein"/>
</dbReference>
<dbReference type="Bgee" id="ENSG00000169087">
    <property type="expression patterns" value="Expressed in oocyte and 188 other cell types or tissues"/>
</dbReference>
<dbReference type="GO" id="GO:0005737">
    <property type="term" value="C:cytoplasm"/>
    <property type="evidence" value="ECO:0007669"/>
    <property type="project" value="UniProtKB-SubCell"/>
</dbReference>
<dbReference type="GO" id="GO:0016706">
    <property type="term" value="F:2-oxoglutarate-dependent dioxygenase activity"/>
    <property type="evidence" value="ECO:0000318"/>
    <property type="project" value="GO_Central"/>
</dbReference>
<dbReference type="FunFam" id="2.60.120.650:FF:000018">
    <property type="entry name" value="HSPB1-associated protein 1 homolog"/>
    <property type="match status" value="1"/>
</dbReference>
<dbReference type="FunFam" id="2.60.120.10:FF:000343">
    <property type="entry name" value="HSPB1-associated protein 1 isoform X3"/>
    <property type="match status" value="1"/>
</dbReference>
<dbReference type="Gene3D" id="2.60.120.650">
    <property type="entry name" value="Cupin"/>
    <property type="match status" value="1"/>
</dbReference>
<dbReference type="InterPro" id="IPR041667">
    <property type="entry name" value="Cupin_8"/>
</dbReference>
<dbReference type="InterPro" id="IPR013296">
    <property type="entry name" value="HSPB1-associated_protein_1"/>
</dbReference>
<dbReference type="InterPro" id="IPR003347">
    <property type="entry name" value="JmjC_dom"/>
</dbReference>
<dbReference type="PANTHER" id="PTHR12461:SF43">
    <property type="entry name" value="HSPB1-ASSOCIATED PROTEIN 1"/>
    <property type="match status" value="1"/>
</dbReference>
<dbReference type="PANTHER" id="PTHR12461">
    <property type="entry name" value="HYPOXIA-INDUCIBLE FACTOR 1 ALPHA INHIBITOR-RELATED"/>
    <property type="match status" value="1"/>
</dbReference>
<dbReference type="Pfam" id="PF13621">
    <property type="entry name" value="Cupin_8"/>
    <property type="match status" value="1"/>
</dbReference>
<dbReference type="PRINTS" id="PR01886">
    <property type="entry name" value="PASS1"/>
</dbReference>
<dbReference type="SMART" id="SM00558">
    <property type="entry name" value="JmjC"/>
    <property type="match status" value="1"/>
</dbReference>
<dbReference type="SUPFAM" id="SSF51197">
    <property type="entry name" value="Clavaminate synthase-like"/>
    <property type="match status" value="1"/>
</dbReference>
<dbReference type="PROSITE" id="PS51184">
    <property type="entry name" value="JMJC"/>
    <property type="match status" value="1"/>
</dbReference>
<name>HBAP1_HUMAN</name>
<evidence type="ECO:0000250" key="1"/>
<evidence type="ECO:0000255" key="2">
    <source>
        <dbReference type="PROSITE-ProRule" id="PRU00538"/>
    </source>
</evidence>
<evidence type="ECO:0000256" key="3">
    <source>
        <dbReference type="SAM" id="MobiDB-lite"/>
    </source>
</evidence>
<evidence type="ECO:0000269" key="4">
    <source>
    </source>
</evidence>
<evidence type="ECO:0000269" key="5">
    <source>
    </source>
</evidence>
<evidence type="ECO:0000269" key="6">
    <source>
    </source>
</evidence>
<evidence type="ECO:0000303" key="7">
    <source>
    </source>
</evidence>
<evidence type="ECO:0000303" key="8">
    <source>
    </source>
</evidence>
<evidence type="ECO:0000305" key="9"/>
<proteinExistence type="evidence at protein level"/>
<sequence>MAAGSEATTPVIVAAGAGGEEGEHVKPFKPEKAKEIIMSLQQPAIFCNMVFDWPARHWNAKYLSQVLHGKQIRFRMGMKSMSTVPQFETTCNYVEATLEEFLTWNCDQSSISGPFRDYDHSKFWAYADYKYFVSLFEDKTDLFQDVKWSDFGFPGRNGQESTLWIGSLGAHTPCHLDSYGCNLVFQVQGRKRWHLFPPEDTPFLYPTRIPYEESSVFSKINVVNPDLKRFPQFRKAQRHAVTLSPGQVLFVPRHWWHYVESIDPVTVSINSWIELEEDHLARVEEAITRMLVCALKTAENPQNTRAWLNPTEVEETSHAVNCCYLNAAVSAFFDRCRTSEVVEIQALRTDGEHMKKEELNVCNHMEVGQTGSQNLTTGTDKPEAASPFGPDLVPVAQRSEEPPSERGGIFGSDGKDFVDKDGEHFGKLHCAKRQQIMSNSENAIEEQIASNTTTTPQTFISTDDLLDCLVNPQVTRIVAQLLIQGRSL</sequence>
<keyword id="KW-0025">Alternative splicing</keyword>
<keyword id="KW-0160">Chromosomal rearrangement</keyword>
<keyword id="KW-0963">Cytoplasm</keyword>
<keyword id="KW-1267">Proteomics identification</keyword>
<keyword id="KW-1185">Reference proteome</keyword>
<reference key="1">
    <citation type="journal article" date="2001" name="Cytogenet. Cell Genet.">
        <title>Molecular cloning and characterization of a novel human gene (HSPBAP1) from human fetal brain.</title>
        <authorList>
            <person name="Jiang M."/>
            <person name="Ma Y."/>
            <person name="Cheng H."/>
            <person name="Ni X."/>
            <person name="Guo L."/>
            <person name="Xie Y."/>
            <person name="Mao Y."/>
        </authorList>
    </citation>
    <scope>NUCLEOTIDE SEQUENCE [MRNA] (ISOFORM 1)</scope>
    <scope>TISSUE SPECIFICITY</scope>
    <source>
        <tissue>Fetal brain</tissue>
    </source>
</reference>
<reference key="2">
    <citation type="journal article" date="2004" name="Nat. Genet.">
        <title>Complete sequencing and characterization of 21,243 full-length human cDNAs.</title>
        <authorList>
            <person name="Ota T."/>
            <person name="Suzuki Y."/>
            <person name="Nishikawa T."/>
            <person name="Otsuki T."/>
            <person name="Sugiyama T."/>
            <person name="Irie R."/>
            <person name="Wakamatsu A."/>
            <person name="Hayashi K."/>
            <person name="Sato H."/>
            <person name="Nagai K."/>
            <person name="Kimura K."/>
            <person name="Makita H."/>
            <person name="Sekine M."/>
            <person name="Obayashi M."/>
            <person name="Nishi T."/>
            <person name="Shibahara T."/>
            <person name="Tanaka T."/>
            <person name="Ishii S."/>
            <person name="Yamamoto J."/>
            <person name="Saito K."/>
            <person name="Kawai Y."/>
            <person name="Isono Y."/>
            <person name="Nakamura Y."/>
            <person name="Nagahari K."/>
            <person name="Murakami K."/>
            <person name="Yasuda T."/>
            <person name="Iwayanagi T."/>
            <person name="Wagatsuma M."/>
            <person name="Shiratori A."/>
            <person name="Sudo H."/>
            <person name="Hosoiri T."/>
            <person name="Kaku Y."/>
            <person name="Kodaira H."/>
            <person name="Kondo H."/>
            <person name="Sugawara M."/>
            <person name="Takahashi M."/>
            <person name="Kanda K."/>
            <person name="Yokoi T."/>
            <person name="Furuya T."/>
            <person name="Kikkawa E."/>
            <person name="Omura Y."/>
            <person name="Abe K."/>
            <person name="Kamihara K."/>
            <person name="Katsuta N."/>
            <person name="Sato K."/>
            <person name="Tanikawa M."/>
            <person name="Yamazaki M."/>
            <person name="Ninomiya K."/>
            <person name="Ishibashi T."/>
            <person name="Yamashita H."/>
            <person name="Murakawa K."/>
            <person name="Fujimori K."/>
            <person name="Tanai H."/>
            <person name="Kimata M."/>
            <person name="Watanabe M."/>
            <person name="Hiraoka S."/>
            <person name="Chiba Y."/>
            <person name="Ishida S."/>
            <person name="Ono Y."/>
            <person name="Takiguchi S."/>
            <person name="Watanabe S."/>
            <person name="Yosida M."/>
            <person name="Hotuta T."/>
            <person name="Kusano J."/>
            <person name="Kanehori K."/>
            <person name="Takahashi-Fujii A."/>
            <person name="Hara H."/>
            <person name="Tanase T.-O."/>
            <person name="Nomura Y."/>
            <person name="Togiya S."/>
            <person name="Komai F."/>
            <person name="Hara R."/>
            <person name="Takeuchi K."/>
            <person name="Arita M."/>
            <person name="Imose N."/>
            <person name="Musashino K."/>
            <person name="Yuuki H."/>
            <person name="Oshima A."/>
            <person name="Sasaki N."/>
            <person name="Aotsuka S."/>
            <person name="Yoshikawa Y."/>
            <person name="Matsunawa H."/>
            <person name="Ichihara T."/>
            <person name="Shiohata N."/>
            <person name="Sano S."/>
            <person name="Moriya S."/>
            <person name="Momiyama H."/>
            <person name="Satoh N."/>
            <person name="Takami S."/>
            <person name="Terashima Y."/>
            <person name="Suzuki O."/>
            <person name="Nakagawa S."/>
            <person name="Senoh A."/>
            <person name="Mizoguchi H."/>
            <person name="Goto Y."/>
            <person name="Shimizu F."/>
            <person name="Wakebe H."/>
            <person name="Hishigaki H."/>
            <person name="Watanabe T."/>
            <person name="Sugiyama A."/>
            <person name="Takemoto M."/>
            <person name="Kawakami B."/>
            <person name="Yamazaki M."/>
            <person name="Watanabe K."/>
            <person name="Kumagai A."/>
            <person name="Itakura S."/>
            <person name="Fukuzumi Y."/>
            <person name="Fujimori Y."/>
            <person name="Komiyama M."/>
            <person name="Tashiro H."/>
            <person name="Tanigami A."/>
            <person name="Fujiwara T."/>
            <person name="Ono T."/>
            <person name="Yamada K."/>
            <person name="Fujii Y."/>
            <person name="Ozaki K."/>
            <person name="Hirao M."/>
            <person name="Ohmori Y."/>
            <person name="Kawabata A."/>
            <person name="Hikiji T."/>
            <person name="Kobatake N."/>
            <person name="Inagaki H."/>
            <person name="Ikema Y."/>
            <person name="Okamoto S."/>
            <person name="Okitani R."/>
            <person name="Kawakami T."/>
            <person name="Noguchi S."/>
            <person name="Itoh T."/>
            <person name="Shigeta K."/>
            <person name="Senba T."/>
            <person name="Matsumura K."/>
            <person name="Nakajima Y."/>
            <person name="Mizuno T."/>
            <person name="Morinaga M."/>
            <person name="Sasaki M."/>
            <person name="Togashi T."/>
            <person name="Oyama M."/>
            <person name="Hata H."/>
            <person name="Watanabe M."/>
            <person name="Komatsu T."/>
            <person name="Mizushima-Sugano J."/>
            <person name="Satoh T."/>
            <person name="Shirai Y."/>
            <person name="Takahashi Y."/>
            <person name="Nakagawa K."/>
            <person name="Okumura K."/>
            <person name="Nagase T."/>
            <person name="Nomura N."/>
            <person name="Kikuchi H."/>
            <person name="Masuho Y."/>
            <person name="Yamashita R."/>
            <person name="Nakai K."/>
            <person name="Yada T."/>
            <person name="Nakamura Y."/>
            <person name="Ohara O."/>
            <person name="Isogai T."/>
            <person name="Sugano S."/>
        </authorList>
    </citation>
    <scope>NUCLEOTIDE SEQUENCE [LARGE SCALE MRNA] (ISOFORM 3)</scope>
    <source>
        <tissue>Placenta</tissue>
    </source>
</reference>
<reference key="3">
    <citation type="journal article" date="2004" name="Genome Res.">
        <title>The status, quality, and expansion of the NIH full-length cDNA project: the Mammalian Gene Collection (MGC).</title>
        <authorList>
            <consortium name="The MGC Project Team"/>
        </authorList>
    </citation>
    <scope>NUCLEOTIDE SEQUENCE [LARGE SCALE MRNA] (ISOFORMS 1 AND 2)</scope>
    <source>
        <tissue>Lung</tissue>
        <tissue>Ovary</tissue>
        <tissue>Prostate</tissue>
    </source>
</reference>
<reference key="4">
    <citation type="journal article" date="2000" name="J. Biol. Chem.">
        <title>Identification and characterization of a novel protein from Sertoli cells, PASS1, that associates with mammalian small stress protein hsp27.</title>
        <authorList>
            <person name="Liu C."/>
            <person name="Gilmont R.R."/>
            <person name="Benndorf R."/>
            <person name="Welsh M.J."/>
        </authorList>
    </citation>
    <scope>INTERACTION WITH CRYAB AND HSPB1</scope>
</reference>
<reference key="5">
    <citation type="journal article" date="2003" name="Genes Chromosomes Cancer">
        <title>Disruption of a novel gene, DIRC3, and expression of DIRC3-HSPBAP1 fusion transcripts in a case of familial renal cell cancer and t(2;3)(q35;q21).</title>
        <authorList>
            <person name="Bodmer D."/>
            <person name="Schepens M."/>
            <person name="Eleveld M.J."/>
            <person name="Schoenmakers E.F.P.M."/>
            <person name="Geurts van Kessel A."/>
        </authorList>
    </citation>
    <scope>CHROMOSOMAL TRANSLOCATION WITH DIRC3</scope>
</reference>
<organism>
    <name type="scientific">Homo sapiens</name>
    <name type="common">Human</name>
    <dbReference type="NCBI Taxonomy" id="9606"/>
    <lineage>
        <taxon>Eukaryota</taxon>
        <taxon>Metazoa</taxon>
        <taxon>Chordata</taxon>
        <taxon>Craniata</taxon>
        <taxon>Vertebrata</taxon>
        <taxon>Euteleostomi</taxon>
        <taxon>Mammalia</taxon>
        <taxon>Eutheria</taxon>
        <taxon>Euarchontoglires</taxon>
        <taxon>Primates</taxon>
        <taxon>Haplorrhini</taxon>
        <taxon>Catarrhini</taxon>
        <taxon>Hominidae</taxon>
        <taxon>Homo</taxon>
    </lineage>
</organism>
<comment type="function">
    <text evidence="1">May play a role in cellular stress response.</text>
</comment>
<comment type="subunit">
    <text evidence="4">Interacts with CRYAB and HSPB1.</text>
</comment>
<comment type="interaction">
    <interactant intactId="EBI-720457">
        <id>Q96EW2</id>
    </interactant>
    <interactant intactId="EBI-2564608">
        <id>Q9NUJ1</id>
        <label>ABHD10</label>
    </interactant>
    <organismsDiffer>false</organismsDiffer>
    <experiments>2</experiments>
</comment>
<comment type="interaction">
    <interactant intactId="EBI-720457">
        <id>Q96EW2</id>
    </interactant>
    <interactant intactId="EBI-602199">
        <id>Q12774</id>
        <label>ARHGEF5</label>
    </interactant>
    <organismsDiffer>false</organismsDiffer>
    <experiments>6</experiments>
</comment>
<comment type="interaction">
    <interactant intactId="EBI-720457">
        <id>Q96EW2</id>
    </interactant>
    <interactant intactId="EBI-749635">
        <id>P61601</id>
        <label>NCALD</label>
    </interactant>
    <organismsDiffer>false</organismsDiffer>
    <experiments>2</experiments>
</comment>
<comment type="interaction">
    <interactant intactId="EBI-720457">
        <id>Q96EW2</id>
    </interactant>
    <interactant intactId="EBI-10178410">
        <id>Q86Y26</id>
        <label>NUTM1</label>
    </interactant>
    <organismsDiffer>false</organismsDiffer>
    <experiments>3</experiments>
</comment>
<comment type="interaction">
    <interactant intactId="EBI-720457">
        <id>Q96EW2</id>
    </interactant>
    <interactant intactId="EBI-2362709">
        <id>Q6IQ49</id>
        <label>SDE2</label>
    </interactant>
    <organismsDiffer>false</organismsDiffer>
    <experiments>2</experiments>
</comment>
<comment type="interaction">
    <interactant intactId="EBI-25835621">
        <id>Q96EW2-2</id>
    </interactant>
    <interactant intactId="EBI-718729">
        <id>P55212</id>
        <label>CASP6</label>
    </interactant>
    <organismsDiffer>false</organismsDiffer>
    <experiments>3</experiments>
</comment>
<comment type="interaction">
    <interactant intactId="EBI-25835621">
        <id>Q96EW2-2</id>
    </interactant>
    <interactant intactId="EBI-348399">
        <id>P22607</id>
        <label>FGFR3</label>
    </interactant>
    <organismsDiffer>false</organismsDiffer>
    <experiments>3</experiments>
</comment>
<comment type="interaction">
    <interactant intactId="EBI-25835621">
        <id>Q96EW2-2</id>
    </interactant>
    <interactant intactId="EBI-351506">
        <id>P06396</id>
        <label>GSN</label>
    </interactant>
    <organismsDiffer>false</organismsDiffer>
    <experiments>3</experiments>
</comment>
<comment type="interaction">
    <interactant intactId="EBI-25835621">
        <id>Q96EW2-2</id>
    </interactant>
    <interactant intactId="EBI-473886">
        <id>O00291</id>
        <label>HIP1</label>
    </interactant>
    <organismsDiffer>false</organismsDiffer>
    <experiments>3</experiments>
</comment>
<comment type="interaction">
    <interactant intactId="EBI-25835621">
        <id>Q96EW2-2</id>
    </interactant>
    <interactant intactId="EBI-352682">
        <id>P04792</id>
        <label>HSPB1</label>
    </interactant>
    <organismsDiffer>false</organismsDiffer>
    <experiments>3</experiments>
</comment>
<comment type="interaction">
    <interactant intactId="EBI-25835621">
        <id>Q96EW2-2</id>
    </interactant>
    <interactant intactId="EBI-10975473">
        <id>O60333-2</id>
        <label>KIF1B</label>
    </interactant>
    <organismsDiffer>false</organismsDiffer>
    <experiments>3</experiments>
</comment>
<comment type="interaction">
    <interactant intactId="EBI-25835621">
        <id>Q96EW2-2</id>
    </interactant>
    <interactant intactId="EBI-21591415">
        <id>P13473-2</id>
        <label>LAMP2</label>
    </interactant>
    <organismsDiffer>false</organismsDiffer>
    <experiments>3</experiments>
</comment>
<comment type="interaction">
    <interactant intactId="EBI-25835621">
        <id>Q96EW2-2</id>
    </interactant>
    <interactant intactId="EBI-5280197">
        <id>O75400-2</id>
        <label>PRPF40A</label>
    </interactant>
    <organismsDiffer>false</organismsDiffer>
    <experiments>3</experiments>
</comment>
<comment type="interaction">
    <interactant intactId="EBI-25835621">
        <id>Q96EW2-2</id>
    </interactant>
    <interactant intactId="EBI-720609">
        <id>O76024</id>
        <label>WFS1</label>
    </interactant>
    <organismsDiffer>false</organismsDiffer>
    <experiments>3</experiments>
</comment>
<comment type="subcellular location">
    <subcellularLocation>
        <location evidence="1">Cytoplasm</location>
    </subcellularLocation>
</comment>
<comment type="alternative products">
    <event type="alternative splicing"/>
    <isoform>
        <id>Q96EW2-1</id>
        <name>1</name>
        <sequence type="displayed"/>
    </isoform>
    <isoform>
        <id>Q96EW2-2</id>
        <name>2</name>
        <sequence type="described" ref="VSP_024442 VSP_024443"/>
    </isoform>
    <isoform>
        <id>Q96EW2-3</id>
        <name>3</name>
        <sequence type="described" ref="VSP_024444 VSP_024445"/>
    </isoform>
</comment>
<comment type="tissue specificity">
    <text evidence="5">Widely expressed.</text>
</comment>
<comment type="disease">
    <text evidence="6">A chromosomal aberration involving HSPBAP1 has been found in a family with renal carcinoma (PubMed:12939738). Translocation t(2;3)(q35;q21) with the putative pseudogene DIRC3 (PubMed:12939738). Produces a hybrid mRNA encoding a truncated HSPBAP1 lacking the first 36 amino acids (PubMed:12939738).</text>
</comment>
<comment type="sequence caution" evidence="9">
    <conflict type="erroneous initiation">
        <sequence resource="EMBL-CDS" id="AAH17763"/>
    </conflict>
</comment>
<comment type="online information" name="Atlas of Genetics and Cytogenetics in Oncology and Haematology">
    <link uri="https://atlasgeneticsoncology.org/gene/513/HSPBAP1"/>
</comment>
<gene>
    <name type="primary">HSPBAP1</name>
    <name type="synonym">PASS1</name>
</gene>
<accession>Q96EW2</accession>
<accession>Q6P476</accession>
<accession>Q8N8J4</accession>
<accession>Q8NHH6</accession>
<accession>Q8WWF0</accession>
<feature type="chain" id="PRO_0000284113" description="HSPB1-associated protein 1">
    <location>
        <begin position="1"/>
        <end position="488"/>
    </location>
</feature>
<feature type="domain" description="JmjC" evidence="2">
    <location>
        <begin position="124"/>
        <end position="288"/>
    </location>
</feature>
<feature type="region of interest" description="Interaction with HSPB1" evidence="1">
    <location>
        <begin position="88"/>
        <end position="208"/>
    </location>
</feature>
<feature type="region of interest" description="Disordered" evidence="3">
    <location>
        <begin position="369"/>
        <end position="415"/>
    </location>
</feature>
<feature type="compositionally biased region" description="Polar residues" evidence="3">
    <location>
        <begin position="369"/>
        <end position="379"/>
    </location>
</feature>
<feature type="splice variant" id="VSP_024442" description="In isoform 2." evidence="8">
    <original>KRWHLFPPEDTPFLYPTRIPYEESSVFSKINVVNP</original>
    <variation>LECNGMIIAPGPQAILLPQPLKYLGLQETMASLSS</variation>
    <location>
        <begin position="191"/>
        <end position="225"/>
    </location>
</feature>
<feature type="splice variant" id="VSP_024443" description="In isoform 2." evidence="8">
    <location>
        <begin position="226"/>
        <end position="488"/>
    </location>
</feature>
<feature type="splice variant" id="VSP_024444" description="In isoform 3." evidence="7">
    <original>FVPRHWWHYVESIDPVTVSINSWIELEEDHL</original>
    <variation>ERKWQEGTQLLLLVKRRMDFGGRQSTRVIFI</variation>
    <location>
        <begin position="250"/>
        <end position="280"/>
    </location>
</feature>
<feature type="splice variant" id="VSP_024445" description="In isoform 3." evidence="7">
    <location>
        <begin position="281"/>
        <end position="488"/>
    </location>
</feature>
<feature type="sequence variant" id="VAR_031703" description="In dbSNP:rs16833517.">
    <original>S</original>
    <variation>A</variation>
    <location>
        <position position="64"/>
    </location>
</feature>
<feature type="sequence conflict" description="In Ref. 2; BAC04847." evidence="9" ref="2">
    <original>F</original>
    <variation>L</variation>
    <location>
        <position position="46"/>
    </location>
</feature>
<feature type="sequence conflict" description="In Ref. 1; AAM64044." evidence="9" ref="1">
    <original>V</original>
    <variation>A</variation>
    <location>
        <position position="320"/>
    </location>
</feature>
<feature type="sequence conflict" description="In Ref. 3; AAH17763." evidence="9" ref="3">
    <original>P</original>
    <variation>PS</variation>
    <location>
        <position position="456"/>
    </location>
</feature>
<protein>
    <recommendedName>
        <fullName>HSPB1-associated protein 1</fullName>
    </recommendedName>
    <alternativeName>
        <fullName>27 kDa heat shock protein-associated protein 1</fullName>
    </alternativeName>
    <alternativeName>
        <fullName>Protein associated with small stress protein 1</fullName>
    </alternativeName>
</protein>